<accession>P21142</accession>
<comment type="function">
    <text>This cephalomyotropic peptide stimulates contractile activity of cockroach protodeum (hindgut).</text>
</comment>
<comment type="subcellular location">
    <subcellularLocation>
        <location>Secreted</location>
    </subcellularLocation>
</comment>
<protein>
    <recommendedName>
        <fullName>Leucokinin-3</fullName>
    </recommendedName>
    <alternativeName>
        <fullName>Leucokinin III</fullName>
        <shortName>L-III</shortName>
    </alternativeName>
</protein>
<evidence type="ECO:0000269" key="1">
    <source ref="1"/>
</evidence>
<reference key="1">
    <citation type="journal article" date="1986" name="Comp. Biochem. Physiol.">
        <title>Primary structure and synthesis of two additional neuropeptides from Leucophaea maderae: members of a new family of Cephalomyotropins.</title>
        <authorList>
            <person name="Holman G.M."/>
            <person name="Cook B.J."/>
            <person name="Nachman R.J."/>
        </authorList>
    </citation>
    <scope>PROTEIN SEQUENCE</scope>
    <scope>AMIDATION AT GLY-8</scope>
    <scope>SYNTHESIS</scope>
    <source>
        <tissue>Head</tissue>
    </source>
</reference>
<keyword id="KW-0027">Amidation</keyword>
<keyword id="KW-0903">Direct protein sequencing</keyword>
<keyword id="KW-0527">Neuropeptide</keyword>
<keyword id="KW-0964">Secreted</keyword>
<proteinExistence type="evidence at protein level"/>
<name>LCK3_RHYMA</name>
<feature type="peptide" id="PRO_0000043448" description="Leucokinin-3">
    <location>
        <begin position="1"/>
        <end position="8"/>
    </location>
</feature>
<feature type="modified residue" description="Glycine amide" evidence="1">
    <location>
        <position position="8"/>
    </location>
</feature>
<dbReference type="GO" id="GO:0005576">
    <property type="term" value="C:extracellular region"/>
    <property type="evidence" value="ECO:0007669"/>
    <property type="project" value="UniProtKB-SubCell"/>
</dbReference>
<dbReference type="GO" id="GO:0007218">
    <property type="term" value="P:neuropeptide signaling pathway"/>
    <property type="evidence" value="ECO:0007669"/>
    <property type="project" value="UniProtKB-KW"/>
</dbReference>
<organism>
    <name type="scientific">Rhyparobia maderae</name>
    <name type="common">Madeira cockroach</name>
    <name type="synonym">Leucophaea maderae</name>
    <dbReference type="NCBI Taxonomy" id="36963"/>
    <lineage>
        <taxon>Eukaryota</taxon>
        <taxon>Metazoa</taxon>
        <taxon>Ecdysozoa</taxon>
        <taxon>Arthropoda</taxon>
        <taxon>Hexapoda</taxon>
        <taxon>Insecta</taxon>
        <taxon>Pterygota</taxon>
        <taxon>Neoptera</taxon>
        <taxon>Polyneoptera</taxon>
        <taxon>Dictyoptera</taxon>
        <taxon>Blattodea</taxon>
        <taxon>Blaberoidea</taxon>
        <taxon>Blaberidae</taxon>
        <taxon>Oxyhaloinae</taxon>
        <taxon>Rhyparobia</taxon>
    </lineage>
</organism>
<sequence length="8" mass="910">DQGFNSWG</sequence>